<name>HLY3C_STACC</name>
<reference evidence="3" key="1">
    <citation type="journal article" date="2008" name="FEMS Microbiol. Lett.">
        <title>The amino acid sequences and activities of synergistic hemolysins from Staphylococcus cohnii.</title>
        <authorList>
            <person name="Mak P."/>
            <person name="Maszewska A."/>
            <person name="Rozalska M."/>
        </authorList>
    </citation>
    <scope>PROTEIN SEQUENCE</scope>
    <scope>FUNCTION</scope>
    <scope>SUBCELLULAR LOCATION</scope>
    <scope>FORMYLATION AT MET-1</scope>
    <source>
        <strain evidence="2">ZMF 77</strain>
    </source>
</reference>
<dbReference type="RefSeq" id="WP_019469020.1">
    <property type="nucleotide sequence ID" value="NZ_PPQC01000046.1"/>
</dbReference>
<dbReference type="SMR" id="P85221"/>
<dbReference type="GeneID" id="78333397"/>
<dbReference type="GO" id="GO:0005576">
    <property type="term" value="C:extracellular region"/>
    <property type="evidence" value="ECO:0007669"/>
    <property type="project" value="UniProtKB-SubCell"/>
</dbReference>
<dbReference type="GO" id="GO:0090729">
    <property type="term" value="F:toxin activity"/>
    <property type="evidence" value="ECO:0007669"/>
    <property type="project" value="UniProtKB-KW"/>
</dbReference>
<dbReference type="GO" id="GO:0031640">
    <property type="term" value="P:killing of cells of another organism"/>
    <property type="evidence" value="ECO:0007669"/>
    <property type="project" value="UniProtKB-KW"/>
</dbReference>
<dbReference type="InterPro" id="IPR008846">
    <property type="entry name" value="PSMbeta"/>
</dbReference>
<dbReference type="Pfam" id="PF05480">
    <property type="entry name" value="PSMbeta"/>
    <property type="match status" value="1"/>
</dbReference>
<protein>
    <recommendedName>
        <fullName>Hemolysin H3C</fullName>
    </recommendedName>
</protein>
<feature type="peptide" id="PRO_0000302132" description="Hemolysin H3C">
    <location>
        <begin position="1"/>
        <end position="43"/>
    </location>
</feature>
<feature type="modified residue" description="N-formylmethionine" evidence="2">
    <location>
        <position position="1"/>
    </location>
</feature>
<accession>P85221</accession>
<organism>
    <name type="scientific">Staphylococcus cohnii subsp. cohnii</name>
    <dbReference type="NCBI Taxonomy" id="74704"/>
    <lineage>
        <taxon>Bacteria</taxon>
        <taxon>Bacillati</taxon>
        <taxon>Bacillota</taxon>
        <taxon>Bacilli</taxon>
        <taxon>Bacillales</taxon>
        <taxon>Staphylococcaceae</taxon>
        <taxon>Staphylococcus</taxon>
        <taxon>Staphylococcus cohnii species complex</taxon>
    </lineage>
</organism>
<keyword id="KW-0204">Cytolysis</keyword>
<keyword id="KW-0903">Direct protein sequencing</keyword>
<keyword id="KW-0291">Formylation</keyword>
<keyword id="KW-0354">Hemolysis</keyword>
<keyword id="KW-0964">Secreted</keyword>
<keyword id="KW-0800">Toxin</keyword>
<keyword id="KW-0843">Virulence</keyword>
<proteinExistence type="evidence at protein level"/>
<sequence length="43" mass="4453">MSDFVNAISEAVKAGLSADWVTMGTSIADALAKGADFILGFFN</sequence>
<evidence type="ECO:0000255" key="1"/>
<evidence type="ECO:0000269" key="2">
    <source>
    </source>
</evidence>
<evidence type="ECO:0000305" key="3"/>
<comment type="function">
    <text evidence="2">Virulence factor. Causes hemolysis of erythrocytes from sheep (HD(50)=2.63 mM), rabbit (HD(50)=2.37 mM), guinea pig (HD(50)=1.98 mM), dog (HD(50)=1.02 mM) and human (HD(50)=2.07 mM). Acts synergistically with beta-hemolysins from S.aureus ATCC 25923. Cytotoxic towards human dermal fibroblasts.</text>
</comment>
<comment type="subcellular location">
    <subcellularLocation>
        <location evidence="2">Secreted</location>
    </subcellularLocation>
</comment>
<comment type="similarity">
    <text evidence="1">Belongs to the staphylococcal hemolytic protein family.</text>
</comment>